<protein>
    <recommendedName>
        <fullName evidence="1">Large ribosomal subunit protein uL30</fullName>
    </recommendedName>
    <alternativeName>
        <fullName evidence="2">50S ribosomal protein L30</fullName>
    </alternativeName>
</protein>
<comment type="subunit">
    <text evidence="1">Part of the 50S ribosomal subunit.</text>
</comment>
<comment type="similarity">
    <text evidence="1">Belongs to the universal ribosomal protein uL30 family.</text>
</comment>
<dbReference type="EMBL" id="CP001298">
    <property type="protein sequence ID" value="ACK83303.1"/>
    <property type="molecule type" value="Genomic_DNA"/>
</dbReference>
<dbReference type="RefSeq" id="WP_012253651.1">
    <property type="nucleotide sequence ID" value="NC_011757.1"/>
</dbReference>
<dbReference type="SMR" id="B7L0T2"/>
<dbReference type="GeneID" id="72989871"/>
<dbReference type="KEGG" id="mch:Mchl_2461"/>
<dbReference type="HOGENOM" id="CLU_131047_1_2_5"/>
<dbReference type="Proteomes" id="UP000002385">
    <property type="component" value="Chromosome"/>
</dbReference>
<dbReference type="GO" id="GO:0022625">
    <property type="term" value="C:cytosolic large ribosomal subunit"/>
    <property type="evidence" value="ECO:0007669"/>
    <property type="project" value="TreeGrafter"/>
</dbReference>
<dbReference type="GO" id="GO:0003735">
    <property type="term" value="F:structural constituent of ribosome"/>
    <property type="evidence" value="ECO:0007669"/>
    <property type="project" value="InterPro"/>
</dbReference>
<dbReference type="GO" id="GO:0006412">
    <property type="term" value="P:translation"/>
    <property type="evidence" value="ECO:0007669"/>
    <property type="project" value="UniProtKB-UniRule"/>
</dbReference>
<dbReference type="CDD" id="cd01658">
    <property type="entry name" value="Ribosomal_L30"/>
    <property type="match status" value="1"/>
</dbReference>
<dbReference type="Gene3D" id="3.30.1390.20">
    <property type="entry name" value="Ribosomal protein L30, ferredoxin-like fold domain"/>
    <property type="match status" value="1"/>
</dbReference>
<dbReference type="HAMAP" id="MF_01371_B">
    <property type="entry name" value="Ribosomal_uL30_B"/>
    <property type="match status" value="1"/>
</dbReference>
<dbReference type="InterPro" id="IPR036919">
    <property type="entry name" value="Ribo_uL30_ferredoxin-like_sf"/>
</dbReference>
<dbReference type="InterPro" id="IPR005996">
    <property type="entry name" value="Ribosomal_uL30_bac-type"/>
</dbReference>
<dbReference type="InterPro" id="IPR016082">
    <property type="entry name" value="Ribosomal_uL30_ferredoxin-like"/>
</dbReference>
<dbReference type="NCBIfam" id="TIGR01308">
    <property type="entry name" value="rpmD_bact"/>
    <property type="match status" value="1"/>
</dbReference>
<dbReference type="PANTHER" id="PTHR15892:SF2">
    <property type="entry name" value="LARGE RIBOSOMAL SUBUNIT PROTEIN UL30M"/>
    <property type="match status" value="1"/>
</dbReference>
<dbReference type="PANTHER" id="PTHR15892">
    <property type="entry name" value="MITOCHONDRIAL RIBOSOMAL PROTEIN L30"/>
    <property type="match status" value="1"/>
</dbReference>
<dbReference type="Pfam" id="PF00327">
    <property type="entry name" value="Ribosomal_L30"/>
    <property type="match status" value="1"/>
</dbReference>
<dbReference type="PIRSF" id="PIRSF002211">
    <property type="entry name" value="Ribosomal_L30_bac-type"/>
    <property type="match status" value="1"/>
</dbReference>
<dbReference type="SUPFAM" id="SSF55129">
    <property type="entry name" value="Ribosomal protein L30p/L7e"/>
    <property type="match status" value="1"/>
</dbReference>
<keyword id="KW-0687">Ribonucleoprotein</keyword>
<keyword id="KW-0689">Ribosomal protein</keyword>
<sequence>MATKTVRIEQIGSPIRREASQRATLVGLKLNKLHRVSELEDTPSVRGMIRKVAHLVRVLDDAAA</sequence>
<organism>
    <name type="scientific">Methylorubrum extorquens (strain CM4 / NCIMB 13688)</name>
    <name type="common">Methylobacterium extorquens</name>
    <dbReference type="NCBI Taxonomy" id="440085"/>
    <lineage>
        <taxon>Bacteria</taxon>
        <taxon>Pseudomonadati</taxon>
        <taxon>Pseudomonadota</taxon>
        <taxon>Alphaproteobacteria</taxon>
        <taxon>Hyphomicrobiales</taxon>
        <taxon>Methylobacteriaceae</taxon>
        <taxon>Methylorubrum</taxon>
    </lineage>
</organism>
<accession>B7L0T2</accession>
<evidence type="ECO:0000255" key="1">
    <source>
        <dbReference type="HAMAP-Rule" id="MF_01371"/>
    </source>
</evidence>
<evidence type="ECO:0000305" key="2"/>
<name>RL30_METC4</name>
<proteinExistence type="inferred from homology"/>
<reference key="1">
    <citation type="submission" date="2008-12" db="EMBL/GenBank/DDBJ databases">
        <title>Complete sequence of chromosome of Methylobacterium chloromethanicum CM4.</title>
        <authorList>
            <consortium name="US DOE Joint Genome Institute"/>
            <person name="Lucas S."/>
            <person name="Copeland A."/>
            <person name="Lapidus A."/>
            <person name="Glavina del Rio T."/>
            <person name="Dalin E."/>
            <person name="Tice H."/>
            <person name="Bruce D."/>
            <person name="Goodwin L."/>
            <person name="Pitluck S."/>
            <person name="Chertkov O."/>
            <person name="Brettin T."/>
            <person name="Detter J.C."/>
            <person name="Han C."/>
            <person name="Larimer F."/>
            <person name="Land M."/>
            <person name="Hauser L."/>
            <person name="Kyrpides N."/>
            <person name="Mikhailova N."/>
            <person name="Marx C."/>
            <person name="Richardson P."/>
        </authorList>
    </citation>
    <scope>NUCLEOTIDE SEQUENCE [LARGE SCALE GENOMIC DNA]</scope>
    <source>
        <strain>CM4 / NCIMB 13688</strain>
    </source>
</reference>
<feature type="chain" id="PRO_1000184150" description="Large ribosomal subunit protein uL30">
    <location>
        <begin position="1"/>
        <end position="64"/>
    </location>
</feature>
<gene>
    <name evidence="1" type="primary">rpmD</name>
    <name type="ordered locus">Mchl_2461</name>
</gene>